<protein>
    <recommendedName>
        <fullName>Ribosomal large subunit pseudouridine synthase B</fullName>
        <ecNumber>5.4.99.22</ecNumber>
    </recommendedName>
    <alternativeName>
        <fullName>23S rRNA pseudouridine(2605) synthase</fullName>
    </alternativeName>
    <alternativeName>
        <fullName>rRNA pseudouridylate synthase B</fullName>
    </alternativeName>
    <alternativeName>
        <fullName>rRNA-uridine isomerase B</fullName>
    </alternativeName>
</protein>
<accession>P45104</accession>
<feature type="chain" id="PRO_0000099986" description="Ribosomal large subunit pseudouridine synthase B">
    <location>
        <begin position="1"/>
        <end position="357"/>
    </location>
</feature>
<feature type="domain" description="S4 RNA-binding" evidence="2">
    <location>
        <begin position="76"/>
        <end position="148"/>
    </location>
</feature>
<feature type="region of interest" description="Disordered" evidence="3">
    <location>
        <begin position="1"/>
        <end position="76"/>
    </location>
</feature>
<feature type="compositionally biased region" description="Polar residues" evidence="3">
    <location>
        <begin position="1"/>
        <end position="12"/>
    </location>
</feature>
<feature type="compositionally biased region" description="Basic and acidic residues" evidence="3">
    <location>
        <begin position="14"/>
        <end position="32"/>
    </location>
</feature>
<feature type="compositionally biased region" description="Polar residues" evidence="3">
    <location>
        <begin position="41"/>
        <end position="54"/>
    </location>
</feature>
<feature type="active site" description="Nucleophile" evidence="1">
    <location>
        <position position="183"/>
    </location>
</feature>
<reference key="1">
    <citation type="journal article" date="1995" name="Science">
        <title>Whole-genome random sequencing and assembly of Haemophilus influenzae Rd.</title>
        <authorList>
            <person name="Fleischmann R.D."/>
            <person name="Adams M.D."/>
            <person name="White O."/>
            <person name="Clayton R.A."/>
            <person name="Kirkness E.F."/>
            <person name="Kerlavage A.R."/>
            <person name="Bult C.J."/>
            <person name="Tomb J.-F."/>
            <person name="Dougherty B.A."/>
            <person name="Merrick J.M."/>
            <person name="McKenney K."/>
            <person name="Sutton G.G."/>
            <person name="FitzHugh W."/>
            <person name="Fields C.A."/>
            <person name="Gocayne J.D."/>
            <person name="Scott J.D."/>
            <person name="Shirley R."/>
            <person name="Liu L.-I."/>
            <person name="Glodek A."/>
            <person name="Kelley J.M."/>
            <person name="Weidman J.F."/>
            <person name="Phillips C.A."/>
            <person name="Spriggs T."/>
            <person name="Hedblom E."/>
            <person name="Cotton M.D."/>
            <person name="Utterback T.R."/>
            <person name="Hanna M.C."/>
            <person name="Nguyen D.T."/>
            <person name="Saudek D.M."/>
            <person name="Brandon R.C."/>
            <person name="Fine L.D."/>
            <person name="Fritchman J.L."/>
            <person name="Fuhrmann J.L."/>
            <person name="Geoghagen N.S.M."/>
            <person name="Gnehm C.L."/>
            <person name="McDonald L.A."/>
            <person name="Small K.V."/>
            <person name="Fraser C.M."/>
            <person name="Smith H.O."/>
            <person name="Venter J.C."/>
        </authorList>
    </citation>
    <scope>NUCLEOTIDE SEQUENCE [LARGE SCALE GENOMIC DNA]</scope>
    <source>
        <strain>ATCC 51907 / DSM 11121 / KW20 / Rd</strain>
    </source>
</reference>
<reference key="2">
    <citation type="journal article" date="2000" name="Electrophoresis">
        <title>Two-dimensional map of the proteome of Haemophilus influenzae.</title>
        <authorList>
            <person name="Langen H."/>
            <person name="Takacs B."/>
            <person name="Evers S."/>
            <person name="Berndt P."/>
            <person name="Lahm H.W."/>
            <person name="Wipf B."/>
            <person name="Gray C."/>
            <person name="Fountoulakis M."/>
        </authorList>
    </citation>
    <scope>IDENTIFICATION BY MASS SPECTROMETRY</scope>
    <source>
        <strain>ATCC 51907 / DSM 11121 / KW20 / Rd</strain>
    </source>
</reference>
<proteinExistence type="evidence at protein level"/>
<keyword id="KW-0413">Isomerase</keyword>
<keyword id="KW-1185">Reference proteome</keyword>
<keyword id="KW-0694">RNA-binding</keyword>
<keyword id="KW-0698">rRNA processing</keyword>
<dbReference type="EC" id="5.4.99.22"/>
<dbReference type="EMBL" id="L42023">
    <property type="protein sequence ID" value="AAC22853.1"/>
    <property type="molecule type" value="Genomic_DNA"/>
</dbReference>
<dbReference type="PIR" id="A64169">
    <property type="entry name" value="A64169"/>
</dbReference>
<dbReference type="RefSeq" id="NP_439355.1">
    <property type="nucleotide sequence ID" value="NC_000907.1"/>
</dbReference>
<dbReference type="SMR" id="P45104"/>
<dbReference type="STRING" id="71421.HI_1199"/>
<dbReference type="EnsemblBacteria" id="AAC22853">
    <property type="protein sequence ID" value="AAC22853"/>
    <property type="gene ID" value="HI_1199"/>
</dbReference>
<dbReference type="KEGG" id="hin:HI_1199"/>
<dbReference type="PATRIC" id="fig|71421.8.peg.1251"/>
<dbReference type="eggNOG" id="COG1187">
    <property type="taxonomic scope" value="Bacteria"/>
</dbReference>
<dbReference type="HOGENOM" id="CLU_024979_1_1_6"/>
<dbReference type="OrthoDB" id="9807213at2"/>
<dbReference type="PhylomeDB" id="P45104"/>
<dbReference type="BioCyc" id="HINF71421:G1GJ1-1230-MONOMER"/>
<dbReference type="Proteomes" id="UP000000579">
    <property type="component" value="Chromosome"/>
</dbReference>
<dbReference type="GO" id="GO:0160139">
    <property type="term" value="F:23S rRNA pseudouridine(2605) synthase activity"/>
    <property type="evidence" value="ECO:0007669"/>
    <property type="project" value="UniProtKB-EC"/>
</dbReference>
<dbReference type="GO" id="GO:0003723">
    <property type="term" value="F:RNA binding"/>
    <property type="evidence" value="ECO:0007669"/>
    <property type="project" value="UniProtKB-KW"/>
</dbReference>
<dbReference type="GO" id="GO:0000455">
    <property type="term" value="P:enzyme-directed rRNA pseudouridine synthesis"/>
    <property type="evidence" value="ECO:0007669"/>
    <property type="project" value="UniProtKB-ARBA"/>
</dbReference>
<dbReference type="CDD" id="cd02556">
    <property type="entry name" value="PseudoU_synth_RluB"/>
    <property type="match status" value="1"/>
</dbReference>
<dbReference type="CDD" id="cd00165">
    <property type="entry name" value="S4"/>
    <property type="match status" value="1"/>
</dbReference>
<dbReference type="FunFam" id="3.10.290.10:FF:000003">
    <property type="entry name" value="Pseudouridine synthase"/>
    <property type="match status" value="1"/>
</dbReference>
<dbReference type="FunFam" id="3.30.70.1560:FF:000001">
    <property type="entry name" value="Pseudouridine synthase"/>
    <property type="match status" value="1"/>
</dbReference>
<dbReference type="FunFam" id="3.30.70.580:FF:000009">
    <property type="entry name" value="Pseudouridine synthase"/>
    <property type="match status" value="1"/>
</dbReference>
<dbReference type="Gene3D" id="3.30.2350.10">
    <property type="entry name" value="Pseudouridine synthase"/>
    <property type="match status" value="1"/>
</dbReference>
<dbReference type="Gene3D" id="3.10.290.10">
    <property type="entry name" value="RNA-binding S4 domain"/>
    <property type="match status" value="1"/>
</dbReference>
<dbReference type="InterPro" id="IPR020103">
    <property type="entry name" value="PsdUridine_synth_cat_dom_sf"/>
</dbReference>
<dbReference type="InterPro" id="IPR006145">
    <property type="entry name" value="PsdUridine_synth_RsuA/RluA"/>
</dbReference>
<dbReference type="InterPro" id="IPR000748">
    <property type="entry name" value="PsdUridine_synth_RsuA/RluB/E/F"/>
</dbReference>
<dbReference type="InterPro" id="IPR018496">
    <property type="entry name" value="PsdUridine_synth_RsuA/RluB_CS"/>
</dbReference>
<dbReference type="InterPro" id="IPR050343">
    <property type="entry name" value="RsuA_PseudoU_synthase"/>
</dbReference>
<dbReference type="InterPro" id="IPR002942">
    <property type="entry name" value="S4_RNA-bd"/>
</dbReference>
<dbReference type="InterPro" id="IPR036986">
    <property type="entry name" value="S4_RNA-bd_sf"/>
</dbReference>
<dbReference type="NCBIfam" id="NF007976">
    <property type="entry name" value="PRK10700.1"/>
    <property type="match status" value="1"/>
</dbReference>
<dbReference type="NCBIfam" id="TIGR00093">
    <property type="entry name" value="pseudouridine synthase"/>
    <property type="match status" value="1"/>
</dbReference>
<dbReference type="PANTHER" id="PTHR47683">
    <property type="entry name" value="PSEUDOURIDINE SYNTHASE FAMILY PROTEIN-RELATED"/>
    <property type="match status" value="1"/>
</dbReference>
<dbReference type="PANTHER" id="PTHR47683:SF3">
    <property type="entry name" value="RIBOSOMAL LARGE SUBUNIT PSEUDOURIDINE SYNTHASE B"/>
    <property type="match status" value="1"/>
</dbReference>
<dbReference type="Pfam" id="PF00849">
    <property type="entry name" value="PseudoU_synth_2"/>
    <property type="match status" value="1"/>
</dbReference>
<dbReference type="Pfam" id="PF01479">
    <property type="entry name" value="S4"/>
    <property type="match status" value="1"/>
</dbReference>
<dbReference type="SMART" id="SM00363">
    <property type="entry name" value="S4"/>
    <property type="match status" value="1"/>
</dbReference>
<dbReference type="SUPFAM" id="SSF55174">
    <property type="entry name" value="Alpha-L RNA-binding motif"/>
    <property type="match status" value="1"/>
</dbReference>
<dbReference type="SUPFAM" id="SSF55120">
    <property type="entry name" value="Pseudouridine synthase"/>
    <property type="match status" value="1"/>
</dbReference>
<dbReference type="PROSITE" id="PS01149">
    <property type="entry name" value="PSI_RSU"/>
    <property type="match status" value="1"/>
</dbReference>
<dbReference type="PROSITE" id="PS50889">
    <property type="entry name" value="S4"/>
    <property type="match status" value="1"/>
</dbReference>
<comment type="function">
    <text evidence="1">Responsible for synthesis of pseudouridine from uracil-2605 in 23S ribosomal RNA.</text>
</comment>
<comment type="catalytic activity">
    <reaction>
        <text>uridine(2605) in 23S rRNA = pseudouridine(2605) in 23S rRNA</text>
        <dbReference type="Rhea" id="RHEA:42520"/>
        <dbReference type="Rhea" id="RHEA-COMP:10095"/>
        <dbReference type="Rhea" id="RHEA-COMP:10096"/>
        <dbReference type="ChEBI" id="CHEBI:65314"/>
        <dbReference type="ChEBI" id="CHEBI:65315"/>
        <dbReference type="EC" id="5.4.99.22"/>
    </reaction>
</comment>
<comment type="similarity">
    <text evidence="4">Belongs to the pseudouridine synthase RsuA family.</text>
</comment>
<sequence length="357" mass="40637">MKPSQKQTQRQPHFSKDSAKKRDFSAKNDRRSVSRTARIETANTKKSAVNSDNKFLSKPKAKPVVRASNQPKAEGEKLQKVLARAGQGSRREIETMIAAGRVSVEGKIATLGDRIDVHSGVKVRIDGQIINLSHTQKEICRVLMYYKPEGELCTRSDPEGRATVFDRLPRLTGSRWIAVGRLDINTSGLLLFTTDGELANRLMHPSREVEREYSVRVFGQVDDAMLARLRKGVQLEDGLANFKEIKFTGGVGINQWYDVTLMEGRNREVRRLWESQGIQVSRLIRIRYGNIKLMKGLPRGGWEEMDLENVNYLRELVGLPAETETKLDVKQASRRPKSGQIRKAVKRYSEMNKRYKK</sequence>
<evidence type="ECO:0000250" key="1"/>
<evidence type="ECO:0000255" key="2">
    <source>
        <dbReference type="PROSITE-ProRule" id="PRU00182"/>
    </source>
</evidence>
<evidence type="ECO:0000256" key="3">
    <source>
        <dbReference type="SAM" id="MobiDB-lite"/>
    </source>
</evidence>
<evidence type="ECO:0000305" key="4"/>
<gene>
    <name type="primary">rluB</name>
    <name type="ordered locus">HI_1199</name>
</gene>
<name>RLUB_HAEIN</name>
<organism>
    <name type="scientific">Haemophilus influenzae (strain ATCC 51907 / DSM 11121 / KW20 / Rd)</name>
    <dbReference type="NCBI Taxonomy" id="71421"/>
    <lineage>
        <taxon>Bacteria</taxon>
        <taxon>Pseudomonadati</taxon>
        <taxon>Pseudomonadota</taxon>
        <taxon>Gammaproteobacteria</taxon>
        <taxon>Pasteurellales</taxon>
        <taxon>Pasteurellaceae</taxon>
        <taxon>Haemophilus</taxon>
    </lineage>
</organism>